<reference key="1">
    <citation type="journal article" date="1992" name="Nature">
        <title>The complete DNA sequence of yeast chromosome III.</title>
        <authorList>
            <person name="Oliver S.G."/>
            <person name="van der Aart Q.J.M."/>
            <person name="Agostoni-Carbone M.L."/>
            <person name="Aigle M."/>
            <person name="Alberghina L."/>
            <person name="Alexandraki D."/>
            <person name="Antoine G."/>
            <person name="Anwar R."/>
            <person name="Ballesta J.P.G."/>
            <person name="Benit P."/>
            <person name="Berben G."/>
            <person name="Bergantino E."/>
            <person name="Biteau N."/>
            <person name="Bolle P.-A."/>
            <person name="Bolotin-Fukuhara M."/>
            <person name="Brown A."/>
            <person name="Brown A.J.P."/>
            <person name="Buhler J.-M."/>
            <person name="Carcano C."/>
            <person name="Carignani G."/>
            <person name="Cederberg H."/>
            <person name="Chanet R."/>
            <person name="Contreras R."/>
            <person name="Crouzet M."/>
            <person name="Daignan-Fornier B."/>
            <person name="Defoor E."/>
            <person name="Delgado M.D."/>
            <person name="Demolder J."/>
            <person name="Doira C."/>
            <person name="Dubois E."/>
            <person name="Dujon B."/>
            <person name="Duesterhoeft A."/>
            <person name="Erdmann D."/>
            <person name="Esteban M."/>
            <person name="Fabre F."/>
            <person name="Fairhead C."/>
            <person name="Faye G."/>
            <person name="Feldmann H."/>
            <person name="Fiers W."/>
            <person name="Francingues-Gaillard M.-C."/>
            <person name="Franco L."/>
            <person name="Frontali L."/>
            <person name="Fukuhara H."/>
            <person name="Fuller L.J."/>
            <person name="Galland P."/>
            <person name="Gent M.E."/>
            <person name="Gigot D."/>
            <person name="Gilliquet V."/>
            <person name="Glansdorff N."/>
            <person name="Goffeau A."/>
            <person name="Grenson M."/>
            <person name="Grisanti P."/>
            <person name="Grivell L.A."/>
            <person name="de Haan M."/>
            <person name="Haasemann M."/>
            <person name="Hatat D."/>
            <person name="Hoenicka J."/>
            <person name="Hegemann J.H."/>
            <person name="Herbert C.J."/>
            <person name="Hilger F."/>
            <person name="Hohmann S."/>
            <person name="Hollenberg C.P."/>
            <person name="Huse K."/>
            <person name="Iborra F."/>
            <person name="Indge K.J."/>
            <person name="Isono K."/>
            <person name="Jacq C."/>
            <person name="Jacquet M."/>
            <person name="James C.M."/>
            <person name="Jauniaux J.-C."/>
            <person name="Jia Y."/>
            <person name="Jimenez A."/>
            <person name="Kelly A."/>
            <person name="Kleinhans U."/>
            <person name="Kreisl P."/>
            <person name="Lanfranchi G."/>
            <person name="Lewis C."/>
            <person name="van der Linden C.G."/>
            <person name="Lucchini G."/>
            <person name="Lutzenkirchen K."/>
            <person name="Maat M.J."/>
            <person name="Mallet L."/>
            <person name="Mannhaupt G."/>
            <person name="Martegani E."/>
            <person name="Mathieu A."/>
            <person name="Maurer C.T.C."/>
            <person name="McConnell D."/>
            <person name="McKee R.A."/>
            <person name="Messenguy F."/>
            <person name="Mewes H.-W."/>
            <person name="Molemans F."/>
            <person name="Montague M.A."/>
            <person name="Muzi Falconi M."/>
            <person name="Navas L."/>
            <person name="Newlon C.S."/>
            <person name="Noone D."/>
            <person name="Pallier C."/>
            <person name="Panzeri L."/>
            <person name="Pearson B.M."/>
            <person name="Perea J."/>
            <person name="Philippsen P."/>
            <person name="Pierard A."/>
            <person name="Planta R.J."/>
            <person name="Plevani P."/>
            <person name="Poetsch B."/>
            <person name="Pohl F.M."/>
            <person name="Purnelle B."/>
            <person name="Ramezani Rad M."/>
            <person name="Rasmussen S.W."/>
            <person name="Raynal A."/>
            <person name="Remacha M.A."/>
            <person name="Richterich P."/>
            <person name="Roberts A.B."/>
            <person name="Rodriguez F."/>
            <person name="Sanz E."/>
            <person name="Schaaff-Gerstenschlaeger I."/>
            <person name="Scherens B."/>
            <person name="Schweitzer B."/>
            <person name="Shu Y."/>
            <person name="Skala J."/>
            <person name="Slonimski P.P."/>
            <person name="Sor F."/>
            <person name="Soustelle C."/>
            <person name="Spiegelberg R."/>
            <person name="Stateva L.I."/>
            <person name="Steensma H.Y."/>
            <person name="Steiner S."/>
            <person name="Thierry A."/>
            <person name="Thireos G."/>
            <person name="Tzermia M."/>
            <person name="Urrestarazu L.A."/>
            <person name="Valle G."/>
            <person name="Vetter I."/>
            <person name="van Vliet-Reedijk J.C."/>
            <person name="Voet M."/>
            <person name="Volckaert G."/>
            <person name="Vreken P."/>
            <person name="Wang H."/>
            <person name="Warmington J.R."/>
            <person name="von Wettstein D."/>
            <person name="Wicksteed B.L."/>
            <person name="Wilson C."/>
            <person name="Wurst H."/>
            <person name="Xu G."/>
            <person name="Yoshikawa A."/>
            <person name="Zimmermann F.K."/>
            <person name="Sgouros J.G."/>
        </authorList>
    </citation>
    <scope>NUCLEOTIDE SEQUENCE [LARGE SCALE GENOMIC DNA]</scope>
    <source>
        <strain>ATCC 204508 / S288c</strain>
    </source>
</reference>
<reference key="2">
    <citation type="journal article" date="2014" name="G3 (Bethesda)">
        <title>The reference genome sequence of Saccharomyces cerevisiae: Then and now.</title>
        <authorList>
            <person name="Engel S.R."/>
            <person name="Dietrich F.S."/>
            <person name="Fisk D.G."/>
            <person name="Binkley G."/>
            <person name="Balakrishnan R."/>
            <person name="Costanzo M.C."/>
            <person name="Dwight S.S."/>
            <person name="Hitz B.C."/>
            <person name="Karra K."/>
            <person name="Nash R.S."/>
            <person name="Weng S."/>
            <person name="Wong E.D."/>
            <person name="Lloyd P."/>
            <person name="Skrzypek M.S."/>
            <person name="Miyasato S.R."/>
            <person name="Simison M."/>
            <person name="Cherry J.M."/>
        </authorList>
    </citation>
    <scope>GENOME REANNOTATION</scope>
    <source>
        <strain>ATCC 204508 / S288c</strain>
    </source>
</reference>
<reference key="3">
    <citation type="journal article" date="2007" name="Genome Res.">
        <title>Approaching a complete repository of sequence-verified protein-encoding clones for Saccharomyces cerevisiae.</title>
        <authorList>
            <person name="Hu Y."/>
            <person name="Rolfs A."/>
            <person name="Bhullar B."/>
            <person name="Murthy T.V.S."/>
            <person name="Zhu C."/>
            <person name="Berger M.F."/>
            <person name="Camargo A.A."/>
            <person name="Kelley F."/>
            <person name="McCarron S."/>
            <person name="Jepson D."/>
            <person name="Richardson A."/>
            <person name="Raphael J."/>
            <person name="Moreira D."/>
            <person name="Taycher E."/>
            <person name="Zuo D."/>
            <person name="Mohr S."/>
            <person name="Kane M.F."/>
            <person name="Williamson J."/>
            <person name="Simpson A.J.G."/>
            <person name="Bulyk M.L."/>
            <person name="Harlow E."/>
            <person name="Marsischky G."/>
            <person name="Kolodner R.D."/>
            <person name="LaBaer J."/>
        </authorList>
    </citation>
    <scope>NUCLEOTIDE SEQUENCE [GENOMIC DNA]</scope>
    <source>
        <strain>ATCC 204508 / S288c</strain>
    </source>
</reference>
<reference key="4">
    <citation type="journal article" date="1996" name="Cell">
        <title>RSC, an essential, abundant chromatin-remodeling complex.</title>
        <authorList>
            <person name="Cairns B.R."/>
            <person name="Lorch Y."/>
            <person name="Li Y."/>
            <person name="Zhang M."/>
            <person name="Lacomis L."/>
            <person name="Erdjument-Bromage H."/>
            <person name="Tempst P."/>
            <person name="Du J."/>
            <person name="Laurent B.C."/>
            <person name="Kornberg R.D."/>
        </authorList>
    </citation>
    <scope>PROTEIN SEQUENCE OF 416-427</scope>
    <scope>FUNCTION</scope>
    <scope>COMPOSITION OF THE RSC COMPLEX</scope>
</reference>
<reference key="5">
    <citation type="journal article" date="1998" name="Nucleic Acids Res.">
        <title>Direct interaction between Rsc6 and Rsc8/Swh3, two proteins that are conserved in SWI/SNF-related complexes.</title>
        <authorList>
            <person name="Treich I."/>
            <person name="Ho L."/>
            <person name="Carlson M."/>
        </authorList>
    </citation>
    <scope>FUNCTION</scope>
    <scope>INTERACTION WITH RSC8</scope>
</reference>
<reference key="6">
    <citation type="journal article" date="1999" name="Cell">
        <title>Histone octamer transfer by a chromatin-remodeling complex.</title>
        <authorList>
            <person name="Lorch Y."/>
            <person name="Zhang M."/>
            <person name="Kornberg R.D."/>
        </authorList>
    </citation>
    <scope>FUNCTION OF THE RSC COMPLEX</scope>
</reference>
<reference key="7">
    <citation type="journal article" date="1999" name="EMBO J.">
        <title>Transcriptional repression of the yeast CHA1 gene requires the chromatin-remodeling complex RSC.</title>
        <authorList>
            <person name="Moreira J.M.A."/>
            <person name="Holmberg S."/>
        </authorList>
    </citation>
    <scope>FUNCTION OF THE RSC COMPLEX</scope>
</reference>
<reference key="8">
    <citation type="journal article" date="1999" name="Mol. Cell">
        <title>Two functionally distinct forms of the RSC nucleosome-remodeling complex, containing essential AT hook, BAH, and bromodomains.</title>
        <authorList>
            <person name="Cairns B.R."/>
            <person name="Schlichter A."/>
            <person name="Erdjument-Bromage H."/>
            <person name="Tempst P."/>
            <person name="Kornberg R.D."/>
            <person name="Winston F."/>
        </authorList>
    </citation>
    <scope>COMPOSITION OF THE RSC COMPLEX</scope>
</reference>
<reference key="9">
    <citation type="journal article" date="2002" name="Genes Dev.">
        <title>Chromatin remodeling by RSC involves ATP-dependent DNA translocation.</title>
        <authorList>
            <person name="Saha A."/>
            <person name="Wittmeyer J."/>
            <person name="Cairns B.R."/>
        </authorList>
    </citation>
    <scope>FUNCTION OF THE RSC COMPLEX</scope>
</reference>
<reference key="10">
    <citation type="journal article" date="2002" name="Genetics">
        <title>Yeast RSC function is required for organization of the cellular cytoskeleton via an alternative PKC1 pathway.</title>
        <authorList>
            <person name="Chai B."/>
            <person name="Hsu J.-M."/>
            <person name="Du J."/>
            <person name="Laurent B.C."/>
        </authorList>
    </citation>
    <scope>FUNCTION OF THE RSC COMPLEX</scope>
</reference>
<reference key="11">
    <citation type="journal article" date="2003" name="Mol. Cell. Biol.">
        <title>The yeast RSC chromatin-remodeling complex is required for kinetochore function in chromosome segregation.</title>
        <authorList>
            <person name="Hsu J.-M."/>
            <person name="Huang J."/>
            <person name="Meluh P.B."/>
            <person name="Laurent B.C."/>
        </authorList>
    </citation>
    <scope>FUNCTION OF THE RSC COMPLEX</scope>
    <scope>SUBCELLULAR LOCATION</scope>
    <scope>INTERACTION OF THE RSC COMPLEX WITH HISTONES</scope>
</reference>
<reference key="12">
    <citation type="journal article" date="2003" name="Nature">
        <title>Global analysis of protein expression in yeast.</title>
        <authorList>
            <person name="Ghaemmaghami S."/>
            <person name="Huh W.-K."/>
            <person name="Bower K."/>
            <person name="Howson R.W."/>
            <person name="Belle A."/>
            <person name="Dephoure N."/>
            <person name="O'Shea E.K."/>
            <person name="Weissman J.S."/>
        </authorList>
    </citation>
    <scope>LEVEL OF PROTEIN EXPRESSION [LARGE SCALE ANALYSIS]</scope>
</reference>
<reference key="13">
    <citation type="journal article" date="2009" name="Science">
        <title>Global analysis of Cdk1 substrate phosphorylation sites provides insights into evolution.</title>
        <authorList>
            <person name="Holt L.J."/>
            <person name="Tuch B.B."/>
            <person name="Villen J."/>
            <person name="Johnson A.D."/>
            <person name="Gygi S.P."/>
            <person name="Morgan D.O."/>
        </authorList>
    </citation>
    <scope>IDENTIFICATION BY MASS SPECTROMETRY [LARGE SCALE ANALYSIS]</scope>
</reference>
<feature type="chain" id="PRO_0000097474" description="Chromatin structure-remodeling complex protein RSC6">
    <location>
        <begin position="1"/>
        <end position="483"/>
    </location>
</feature>
<feature type="region of interest" description="Disordered" evidence="1">
    <location>
        <begin position="142"/>
        <end position="183"/>
    </location>
</feature>
<feature type="region of interest" description="Disordered" evidence="1">
    <location>
        <begin position="273"/>
        <end position="309"/>
    </location>
</feature>
<feature type="compositionally biased region" description="Low complexity" evidence="1">
    <location>
        <begin position="148"/>
        <end position="158"/>
    </location>
</feature>
<feature type="compositionally biased region" description="Acidic residues" evidence="1">
    <location>
        <begin position="171"/>
        <end position="180"/>
    </location>
</feature>
<feature type="turn" evidence="12">
    <location>
        <begin position="24"/>
        <end position="26"/>
    </location>
</feature>
<feature type="helix" evidence="12">
    <location>
        <begin position="30"/>
        <end position="50"/>
    </location>
</feature>
<feature type="strand" evidence="12">
    <location>
        <begin position="74"/>
        <end position="81"/>
    </location>
</feature>
<feature type="strand" evidence="12">
    <location>
        <begin position="219"/>
        <end position="222"/>
    </location>
</feature>
<feature type="strand" evidence="12">
    <location>
        <begin position="231"/>
        <end position="234"/>
    </location>
</feature>
<feature type="helix" evidence="12">
    <location>
        <begin position="238"/>
        <end position="241"/>
    </location>
</feature>
<feature type="strand" evidence="12">
    <location>
        <begin position="245"/>
        <end position="247"/>
    </location>
</feature>
<feature type="helix" evidence="12">
    <location>
        <begin position="249"/>
        <end position="262"/>
    </location>
</feature>
<feature type="helix" evidence="12">
    <location>
        <begin position="269"/>
        <end position="274"/>
    </location>
</feature>
<feature type="turn" evidence="11">
    <location>
        <begin position="309"/>
        <end position="311"/>
    </location>
</feature>
<feature type="helix" evidence="12">
    <location>
        <begin position="317"/>
        <end position="323"/>
    </location>
</feature>
<feature type="strand" evidence="12">
    <location>
        <begin position="328"/>
        <end position="330"/>
    </location>
</feature>
<feature type="helix" evidence="12">
    <location>
        <begin position="332"/>
        <end position="341"/>
    </location>
</feature>
<feature type="strand" evidence="12">
    <location>
        <begin position="349"/>
        <end position="352"/>
    </location>
</feature>
<feature type="strand" evidence="12">
    <location>
        <begin position="358"/>
        <end position="361"/>
    </location>
</feature>
<feature type="helix" evidence="12">
    <location>
        <begin position="373"/>
        <end position="376"/>
    </location>
</feature>
<feature type="strand" evidence="12">
    <location>
        <begin position="385"/>
        <end position="387"/>
    </location>
</feature>
<feature type="helix" evidence="12">
    <location>
        <begin position="388"/>
        <end position="424"/>
    </location>
</feature>
<feature type="helix" evidence="12">
    <location>
        <begin position="426"/>
        <end position="444"/>
    </location>
</feature>
<feature type="helix" evidence="12">
    <location>
        <begin position="453"/>
        <end position="456"/>
    </location>
</feature>
<feature type="strand" evidence="12">
    <location>
        <begin position="457"/>
        <end position="459"/>
    </location>
</feature>
<feature type="turn" evidence="11">
    <location>
        <begin position="465"/>
        <end position="467"/>
    </location>
</feature>
<feature type="helix" evidence="12">
    <location>
        <begin position="471"/>
        <end position="473"/>
    </location>
</feature>
<feature type="helix" evidence="12">
    <location>
        <begin position="474"/>
        <end position="479"/>
    </location>
</feature>
<name>RSC6_YEAST</name>
<comment type="function">
    <text evidence="2 3 4 5 6 8 9">Component of the chromatin structure-remodeling complex (RSC), which is involved in transcription regulation and nucleosome positioning. RSC is responsible for the transfer of a histone octamer from a nucleosome core particle to naked DNA. The reaction requires ATP and involves an activated RSC-nucleosome intermediate. Remodeling reaction also involves DNA translocation, DNA twist and conformational change. As a reconfigurer of centromeric and flanking nucleosomes, RSC complex is required both for proper kinetochore function in chromosome segregation and, via a PKC1-dependent signaling pathway, for organization of the cellular cytoskeleton. This subunit is essential for mitotic growth and suppresses formamide sensitivity of the RSC8 mutants.</text>
</comment>
<comment type="subunit">
    <text evidence="6 9">Interacts directly with RSC8. Component of the two forms of the RSC complex composed of at least either RSC1 or RSC2, and ARP7, ARP9, LDB7, NPL6, RSC3, RSC30, RSC4, RSC58, RSC6, RSC8, RSC9, SFH1, STH1, HTL1 and probably RTT102. The complexes interact with histone and histone variant components of centromeric chromatin.</text>
</comment>
<comment type="interaction">
    <interactant intactId="EBI-21941">
        <id>P25632</id>
    </interactant>
    <interactant intactId="EBI-36549">
        <id>Q07979</id>
        <label>RSC58</label>
    </interactant>
    <organismsDiffer>false</organismsDiffer>
    <experiments>8</experiments>
</comment>
<comment type="interaction">
    <interactant intactId="EBI-21941">
        <id>P25632</id>
    </interactant>
    <interactant intactId="EBI-23005">
        <id>P43609</id>
        <label>RSC8</label>
    </interactant>
    <organismsDiffer>false</organismsDiffer>
    <experiments>13</experiments>
</comment>
<comment type="subcellular location">
    <subcellularLocation>
        <location evidence="6">Nucleus</location>
    </subcellularLocation>
    <text>Localizes to centromeric and flanking chromatin. Association with these loci is dependent on STH1.</text>
</comment>
<comment type="miscellaneous">
    <text evidence="7">Present with 2470 molecules/cell in log phase SD medium.</text>
</comment>
<comment type="similarity">
    <text evidence="10">To yeast SNF12.</text>
</comment>
<dbReference type="EMBL" id="X59720">
    <property type="protein sequence ID" value="CAA42283.1"/>
    <property type="molecule type" value="Genomic_DNA"/>
</dbReference>
<dbReference type="EMBL" id="AY692985">
    <property type="protein sequence ID" value="AAT93004.1"/>
    <property type="molecule type" value="Genomic_DNA"/>
</dbReference>
<dbReference type="EMBL" id="BK006937">
    <property type="protein sequence ID" value="DAA07529.1"/>
    <property type="molecule type" value="Genomic_DNA"/>
</dbReference>
<dbReference type="PIR" id="S19466">
    <property type="entry name" value="S19466"/>
</dbReference>
<dbReference type="RefSeq" id="NP_009981.1">
    <property type="nucleotide sequence ID" value="NM_001178766.1"/>
</dbReference>
<dbReference type="PDB" id="6K15">
    <property type="method" value="EM"/>
    <property type="resolution" value="3.40 A"/>
    <property type="chains" value="I=1-483"/>
</dbReference>
<dbReference type="PDB" id="6KW3">
    <property type="method" value="EM"/>
    <property type="resolution" value="7.13 A"/>
    <property type="chains" value="I=1-483"/>
</dbReference>
<dbReference type="PDB" id="6KW4">
    <property type="method" value="EM"/>
    <property type="resolution" value="7.55 A"/>
    <property type="chains" value="I=1-483"/>
</dbReference>
<dbReference type="PDB" id="6KW5">
    <property type="method" value="EM"/>
    <property type="resolution" value="10.13 A"/>
    <property type="chains" value="I=1-483"/>
</dbReference>
<dbReference type="PDB" id="6TDA">
    <property type="method" value="EM"/>
    <property type="resolution" value="15.00 A"/>
    <property type="chains" value="O=1-483"/>
</dbReference>
<dbReference type="PDB" id="6V8O">
    <property type="method" value="EM"/>
    <property type="resolution" value="3.07 A"/>
    <property type="chains" value="M=1-483"/>
</dbReference>
<dbReference type="PDB" id="6V92">
    <property type="method" value="EM"/>
    <property type="resolution" value="20.00 A"/>
    <property type="chains" value="M=1-483"/>
</dbReference>
<dbReference type="PDBsum" id="6K15"/>
<dbReference type="PDBsum" id="6KW3"/>
<dbReference type="PDBsum" id="6KW4"/>
<dbReference type="PDBsum" id="6KW5"/>
<dbReference type="PDBsum" id="6TDA"/>
<dbReference type="PDBsum" id="6V8O"/>
<dbReference type="PDBsum" id="6V92"/>
<dbReference type="EMDB" id="EMD-0777"/>
<dbReference type="EMDB" id="EMD-0778"/>
<dbReference type="EMDB" id="EMD-0779"/>
<dbReference type="EMDB" id="EMD-10465"/>
<dbReference type="EMDB" id="EMD-21107"/>
<dbReference type="EMDB" id="EMD-21114"/>
<dbReference type="EMDB" id="EMD-9905"/>
<dbReference type="SMR" id="P25632"/>
<dbReference type="BioGRID" id="31032">
    <property type="interactions" value="417"/>
</dbReference>
<dbReference type="ComplexPortal" id="CPX-1888">
    <property type="entry name" value="RSC chromatin remodelling complex, variant RSC2"/>
</dbReference>
<dbReference type="ComplexPortal" id="CPX-1889">
    <property type="entry name" value="RSC chromatin remodelling complex, variant RSC1"/>
</dbReference>
<dbReference type="DIP" id="DIP-4999N"/>
<dbReference type="FunCoup" id="P25632">
    <property type="interactions" value="924"/>
</dbReference>
<dbReference type="IntAct" id="P25632">
    <property type="interactions" value="59"/>
</dbReference>
<dbReference type="MINT" id="P25632"/>
<dbReference type="STRING" id="4932.YCR052W"/>
<dbReference type="GlyGen" id="P25632">
    <property type="glycosylation" value="1 site"/>
</dbReference>
<dbReference type="iPTMnet" id="P25632"/>
<dbReference type="PaxDb" id="4932-YCR052W"/>
<dbReference type="PeptideAtlas" id="P25632"/>
<dbReference type="EnsemblFungi" id="YCR052W_mRNA">
    <property type="protein sequence ID" value="YCR052W"/>
    <property type="gene ID" value="YCR052W"/>
</dbReference>
<dbReference type="GeneID" id="850419"/>
<dbReference type="KEGG" id="sce:YCR052W"/>
<dbReference type="AGR" id="SGD:S000000648"/>
<dbReference type="SGD" id="S000000648">
    <property type="gene designation" value="RSC6"/>
</dbReference>
<dbReference type="VEuPathDB" id="FungiDB:YCR052W"/>
<dbReference type="eggNOG" id="KOG2570">
    <property type="taxonomic scope" value="Eukaryota"/>
</dbReference>
<dbReference type="GeneTree" id="ENSGT00940000176438"/>
<dbReference type="HOGENOM" id="CLU_032070_0_0_1"/>
<dbReference type="InParanoid" id="P25632"/>
<dbReference type="OMA" id="LRCSITI"/>
<dbReference type="OrthoDB" id="10263741at2759"/>
<dbReference type="BioCyc" id="YEAST:G3O-29361-MONOMER"/>
<dbReference type="BioGRID-ORCS" id="850419">
    <property type="hits" value="2 hits in 10 CRISPR screens"/>
</dbReference>
<dbReference type="PRO" id="PR:P25632"/>
<dbReference type="Proteomes" id="UP000002311">
    <property type="component" value="Chromosome III"/>
</dbReference>
<dbReference type="RNAct" id="P25632">
    <property type="molecule type" value="protein"/>
</dbReference>
<dbReference type="GO" id="GO:0000785">
    <property type="term" value="C:chromatin"/>
    <property type="evidence" value="ECO:0000303"/>
    <property type="project" value="ComplexPortal"/>
</dbReference>
<dbReference type="GO" id="GO:0005634">
    <property type="term" value="C:nucleus"/>
    <property type="evidence" value="ECO:0000318"/>
    <property type="project" value="GO_Central"/>
</dbReference>
<dbReference type="GO" id="GO:0016586">
    <property type="term" value="C:RSC-type complex"/>
    <property type="evidence" value="ECO:0000314"/>
    <property type="project" value="UniProtKB"/>
</dbReference>
<dbReference type="GO" id="GO:0005198">
    <property type="term" value="F:structural molecule activity"/>
    <property type="evidence" value="ECO:0000314"/>
    <property type="project" value="SGD"/>
</dbReference>
<dbReference type="GO" id="GO:0006338">
    <property type="term" value="P:chromatin remodeling"/>
    <property type="evidence" value="ECO:0000314"/>
    <property type="project" value="UniProtKB"/>
</dbReference>
<dbReference type="GO" id="GO:0006337">
    <property type="term" value="P:nucleosome disassembly"/>
    <property type="evidence" value="ECO:0000314"/>
    <property type="project" value="SGD"/>
</dbReference>
<dbReference type="GO" id="GO:0032968">
    <property type="term" value="P:positive regulation of transcription elongation by RNA polymerase II"/>
    <property type="evidence" value="ECO:0000314"/>
    <property type="project" value="SGD"/>
</dbReference>
<dbReference type="Gene3D" id="1.10.245.10">
    <property type="entry name" value="SWIB/MDM2 domain"/>
    <property type="match status" value="1"/>
</dbReference>
<dbReference type="InterPro" id="IPR036885">
    <property type="entry name" value="SWIB_MDM2_dom_sf"/>
</dbReference>
<dbReference type="PANTHER" id="PTHR13844">
    <property type="entry name" value="SWI/SNF-RELATED MATRIX-ASSOCIATED ACTIN-DEPENDENT REGULATOR OF CHROMATIN SUBFAMILY D"/>
    <property type="match status" value="1"/>
</dbReference>
<dbReference type="SUPFAM" id="SSF47592">
    <property type="entry name" value="SWIB/MDM2 domain"/>
    <property type="match status" value="1"/>
</dbReference>
<gene>
    <name type="primary">RSC6</name>
    <name type="ordered locus">YCR052W</name>
    <name type="ORF">YCR52W</name>
</gene>
<sequence length="483" mass="54165">MVTQTNPVPVTYPTDAYIPTYLPDDKVSNLADLKKLIEMDSRLDLYLTRRRLDTSINLPTNTKTKDHPPNKEMLRIYVYNTTESSPRSDSGTPADSGKTTWTLRIEGKLLHESANGKHPFSEFLEGVAVDFKRLKPLGMGKKRKRDSSLSLPLNLQQPEYNDQDSTMGDNDNGEDEDSAEAESREEIVDALEWNYDENNVVEFDGIDIKRQGKDNLRCSITIQLRGVDGGKVQYSPNLATLIGMQTGSVNDAVYSIYKYILINNLFVTEQTEAQDGSNDAEDSSNENNNKNGAGDDDGVEGSTPKDKPELGEVKLDSLLQKVLDTNAAHLPLMNVVQTVNKLVSPLPPIILDYTIDLSKDTTYGATTLDVDVSHILHQPQPQPNLQKEEETDAEDTAKLREITKLALQLNSSAQKYQFFHELSLHPRETLTHYLWSSKQNELVLQGDQYFNEDAARTSDIYSNNNNDRSLMGNISLLYSQGRL</sequence>
<protein>
    <recommendedName>
        <fullName>Chromatin structure-remodeling complex protein RSC6</fullName>
    </recommendedName>
    <alternativeName>
        <fullName>Remodel the structure of chromatin complex subunit 6</fullName>
    </alternativeName>
</protein>
<accession>P25632</accession>
<accession>D6VR60</accession>
<proteinExistence type="evidence at protein level"/>
<organism>
    <name type="scientific">Saccharomyces cerevisiae (strain ATCC 204508 / S288c)</name>
    <name type="common">Baker's yeast</name>
    <dbReference type="NCBI Taxonomy" id="559292"/>
    <lineage>
        <taxon>Eukaryota</taxon>
        <taxon>Fungi</taxon>
        <taxon>Dikarya</taxon>
        <taxon>Ascomycota</taxon>
        <taxon>Saccharomycotina</taxon>
        <taxon>Saccharomycetes</taxon>
        <taxon>Saccharomycetales</taxon>
        <taxon>Saccharomycetaceae</taxon>
        <taxon>Saccharomyces</taxon>
    </lineage>
</organism>
<keyword id="KW-0002">3D-structure</keyword>
<keyword id="KW-0156">Chromatin regulator</keyword>
<keyword id="KW-0903">Direct protein sequencing</keyword>
<keyword id="KW-0539">Nucleus</keyword>
<keyword id="KW-1185">Reference proteome</keyword>
<keyword id="KW-0804">Transcription</keyword>
<keyword id="KW-0805">Transcription regulation</keyword>
<evidence type="ECO:0000256" key="1">
    <source>
        <dbReference type="SAM" id="MobiDB-lite"/>
    </source>
</evidence>
<evidence type="ECO:0000269" key="2">
    <source>
    </source>
</evidence>
<evidence type="ECO:0000269" key="3">
    <source>
    </source>
</evidence>
<evidence type="ECO:0000269" key="4">
    <source>
    </source>
</evidence>
<evidence type="ECO:0000269" key="5">
    <source>
    </source>
</evidence>
<evidence type="ECO:0000269" key="6">
    <source>
    </source>
</evidence>
<evidence type="ECO:0000269" key="7">
    <source>
    </source>
</evidence>
<evidence type="ECO:0000269" key="8">
    <source>
    </source>
</evidence>
<evidence type="ECO:0000269" key="9">
    <source>
    </source>
</evidence>
<evidence type="ECO:0000305" key="10"/>
<evidence type="ECO:0007829" key="11">
    <source>
        <dbReference type="PDB" id="6K15"/>
    </source>
</evidence>
<evidence type="ECO:0007829" key="12">
    <source>
        <dbReference type="PDB" id="6V8O"/>
    </source>
</evidence>